<organism>
    <name type="scientific">Streptococcus suis (strain 05ZYH33)</name>
    <dbReference type="NCBI Taxonomy" id="391295"/>
    <lineage>
        <taxon>Bacteria</taxon>
        <taxon>Bacillati</taxon>
        <taxon>Bacillota</taxon>
        <taxon>Bacilli</taxon>
        <taxon>Lactobacillales</taxon>
        <taxon>Streptococcaceae</taxon>
        <taxon>Streptococcus</taxon>
    </lineage>
</organism>
<evidence type="ECO:0000255" key="1">
    <source>
        <dbReference type="HAMAP-Rule" id="MF_00127"/>
    </source>
</evidence>
<gene>
    <name evidence="1" type="primary">hisS</name>
    <name type="ordered locus">SSU05_0278</name>
</gene>
<accession>A4VT07</accession>
<proteinExistence type="inferred from homology"/>
<name>SYH_STRSY</name>
<reference key="1">
    <citation type="journal article" date="2007" name="PLoS ONE">
        <title>A glimpse of streptococcal toxic shock syndrome from comparative genomics of S. suis 2 Chinese isolates.</title>
        <authorList>
            <person name="Chen C."/>
            <person name="Tang J."/>
            <person name="Dong W."/>
            <person name="Wang C."/>
            <person name="Feng Y."/>
            <person name="Wang J."/>
            <person name="Zheng F."/>
            <person name="Pan X."/>
            <person name="Liu D."/>
            <person name="Li M."/>
            <person name="Song Y."/>
            <person name="Zhu X."/>
            <person name="Sun H."/>
            <person name="Feng T."/>
            <person name="Guo Z."/>
            <person name="Ju A."/>
            <person name="Ge J."/>
            <person name="Dong Y."/>
            <person name="Sun W."/>
            <person name="Jiang Y."/>
            <person name="Wang J."/>
            <person name="Yan J."/>
            <person name="Yang H."/>
            <person name="Wang X."/>
            <person name="Gao G.F."/>
            <person name="Yang R."/>
            <person name="Wang J."/>
            <person name="Yu J."/>
        </authorList>
    </citation>
    <scope>NUCLEOTIDE SEQUENCE [LARGE SCALE GENOMIC DNA]</scope>
    <source>
        <strain>05ZYH33</strain>
    </source>
</reference>
<dbReference type="EC" id="6.1.1.21" evidence="1"/>
<dbReference type="EMBL" id="CP000407">
    <property type="protein sequence ID" value="ABP89246.1"/>
    <property type="molecule type" value="Genomic_DNA"/>
</dbReference>
<dbReference type="SMR" id="A4VT07"/>
<dbReference type="STRING" id="391295.SSU05_0278"/>
<dbReference type="KEGG" id="ssu:SSU05_0278"/>
<dbReference type="eggNOG" id="COG0124">
    <property type="taxonomic scope" value="Bacteria"/>
</dbReference>
<dbReference type="HOGENOM" id="CLU_025113_1_1_9"/>
<dbReference type="GO" id="GO:0005737">
    <property type="term" value="C:cytoplasm"/>
    <property type="evidence" value="ECO:0007669"/>
    <property type="project" value="UniProtKB-SubCell"/>
</dbReference>
<dbReference type="GO" id="GO:0005524">
    <property type="term" value="F:ATP binding"/>
    <property type="evidence" value="ECO:0007669"/>
    <property type="project" value="UniProtKB-UniRule"/>
</dbReference>
<dbReference type="GO" id="GO:0140096">
    <property type="term" value="F:catalytic activity, acting on a protein"/>
    <property type="evidence" value="ECO:0007669"/>
    <property type="project" value="UniProtKB-ARBA"/>
</dbReference>
<dbReference type="GO" id="GO:0004821">
    <property type="term" value="F:histidine-tRNA ligase activity"/>
    <property type="evidence" value="ECO:0007669"/>
    <property type="project" value="UniProtKB-UniRule"/>
</dbReference>
<dbReference type="GO" id="GO:0016740">
    <property type="term" value="F:transferase activity"/>
    <property type="evidence" value="ECO:0007669"/>
    <property type="project" value="UniProtKB-ARBA"/>
</dbReference>
<dbReference type="GO" id="GO:0006427">
    <property type="term" value="P:histidyl-tRNA aminoacylation"/>
    <property type="evidence" value="ECO:0007669"/>
    <property type="project" value="UniProtKB-UniRule"/>
</dbReference>
<dbReference type="CDD" id="cd00773">
    <property type="entry name" value="HisRS-like_core"/>
    <property type="match status" value="1"/>
</dbReference>
<dbReference type="CDD" id="cd00859">
    <property type="entry name" value="HisRS_anticodon"/>
    <property type="match status" value="1"/>
</dbReference>
<dbReference type="FunFam" id="3.30.930.10:FF:000005">
    <property type="entry name" value="Histidine--tRNA ligase"/>
    <property type="match status" value="1"/>
</dbReference>
<dbReference type="Gene3D" id="3.40.50.800">
    <property type="entry name" value="Anticodon-binding domain"/>
    <property type="match status" value="1"/>
</dbReference>
<dbReference type="Gene3D" id="3.30.930.10">
    <property type="entry name" value="Bira Bifunctional Protein, Domain 2"/>
    <property type="match status" value="1"/>
</dbReference>
<dbReference type="HAMAP" id="MF_00127">
    <property type="entry name" value="His_tRNA_synth"/>
    <property type="match status" value="1"/>
</dbReference>
<dbReference type="InterPro" id="IPR006195">
    <property type="entry name" value="aa-tRNA-synth_II"/>
</dbReference>
<dbReference type="InterPro" id="IPR045864">
    <property type="entry name" value="aa-tRNA-synth_II/BPL/LPL"/>
</dbReference>
<dbReference type="InterPro" id="IPR004154">
    <property type="entry name" value="Anticodon-bd"/>
</dbReference>
<dbReference type="InterPro" id="IPR036621">
    <property type="entry name" value="Anticodon-bd_dom_sf"/>
</dbReference>
<dbReference type="InterPro" id="IPR015807">
    <property type="entry name" value="His-tRNA-ligase"/>
</dbReference>
<dbReference type="InterPro" id="IPR041715">
    <property type="entry name" value="HisRS-like_core"/>
</dbReference>
<dbReference type="InterPro" id="IPR004516">
    <property type="entry name" value="HisRS/HisZ"/>
</dbReference>
<dbReference type="InterPro" id="IPR033656">
    <property type="entry name" value="HisRS_anticodon"/>
</dbReference>
<dbReference type="NCBIfam" id="TIGR00442">
    <property type="entry name" value="hisS"/>
    <property type="match status" value="1"/>
</dbReference>
<dbReference type="PANTHER" id="PTHR43707:SF1">
    <property type="entry name" value="HISTIDINE--TRNA LIGASE, MITOCHONDRIAL-RELATED"/>
    <property type="match status" value="1"/>
</dbReference>
<dbReference type="PANTHER" id="PTHR43707">
    <property type="entry name" value="HISTIDYL-TRNA SYNTHETASE"/>
    <property type="match status" value="1"/>
</dbReference>
<dbReference type="Pfam" id="PF03129">
    <property type="entry name" value="HGTP_anticodon"/>
    <property type="match status" value="1"/>
</dbReference>
<dbReference type="Pfam" id="PF13393">
    <property type="entry name" value="tRNA-synt_His"/>
    <property type="match status" value="1"/>
</dbReference>
<dbReference type="PIRSF" id="PIRSF001549">
    <property type="entry name" value="His-tRNA_synth"/>
    <property type="match status" value="1"/>
</dbReference>
<dbReference type="SUPFAM" id="SSF52954">
    <property type="entry name" value="Class II aaRS ABD-related"/>
    <property type="match status" value="1"/>
</dbReference>
<dbReference type="SUPFAM" id="SSF55681">
    <property type="entry name" value="Class II aaRS and biotin synthetases"/>
    <property type="match status" value="1"/>
</dbReference>
<dbReference type="PROSITE" id="PS50862">
    <property type="entry name" value="AA_TRNA_LIGASE_II"/>
    <property type="match status" value="1"/>
</dbReference>
<feature type="chain" id="PRO_1000016467" description="Histidine--tRNA ligase">
    <location>
        <begin position="1"/>
        <end position="427"/>
    </location>
</feature>
<keyword id="KW-0030">Aminoacyl-tRNA synthetase</keyword>
<keyword id="KW-0067">ATP-binding</keyword>
<keyword id="KW-0963">Cytoplasm</keyword>
<keyword id="KW-0436">Ligase</keyword>
<keyword id="KW-0547">Nucleotide-binding</keyword>
<keyword id="KW-0648">Protein biosynthesis</keyword>
<protein>
    <recommendedName>
        <fullName evidence="1">Histidine--tRNA ligase</fullName>
        <ecNumber evidence="1">6.1.1.21</ecNumber>
    </recommendedName>
    <alternativeName>
        <fullName evidence="1">Histidyl-tRNA synthetase</fullName>
        <shortName evidence="1">HisRS</shortName>
    </alternativeName>
</protein>
<sequence length="427" mass="48561">MKLQKPKGTQDLLPQDSAKWQYVENFTRSIFKQYNYAEIRTPIFEHYEVISRSVGDTTDIVTKEMYDFYDKGERHITLRPEGTAPVVRSYVENKLFAPEVQKPAKFYYMGPMFRYERPQAGRLRQFHQIGVECFGSNNPATDVETIAMAYHFFEELGIKDIRLHLNSLGNPESRAAYRQALIDYLTPLKEQLSKDSQRRLEENPLRVLDSKEKEDKVAVENAPSILDYLDEESTVHFEAVRSMLDNLGITYTIDTNMVRGLDYYNHTIFEFMTEVGGNDLTICAGGRYDGLVTYFGGPETPAFGFGMGIERLILVLEKQGIELPLDTQLDVYIAVLGQEANGGALDLVQAIRKQGFRAERDYLDRKLKAQFKSADVFGAKAIITLGGSEIESGQVVVKNNQTRSQVETSLEALKTDFASILEELEKQ</sequence>
<comment type="catalytic activity">
    <reaction evidence="1">
        <text>tRNA(His) + L-histidine + ATP = L-histidyl-tRNA(His) + AMP + diphosphate + H(+)</text>
        <dbReference type="Rhea" id="RHEA:17313"/>
        <dbReference type="Rhea" id="RHEA-COMP:9665"/>
        <dbReference type="Rhea" id="RHEA-COMP:9689"/>
        <dbReference type="ChEBI" id="CHEBI:15378"/>
        <dbReference type="ChEBI" id="CHEBI:30616"/>
        <dbReference type="ChEBI" id="CHEBI:33019"/>
        <dbReference type="ChEBI" id="CHEBI:57595"/>
        <dbReference type="ChEBI" id="CHEBI:78442"/>
        <dbReference type="ChEBI" id="CHEBI:78527"/>
        <dbReference type="ChEBI" id="CHEBI:456215"/>
        <dbReference type="EC" id="6.1.1.21"/>
    </reaction>
</comment>
<comment type="subunit">
    <text evidence="1">Homodimer.</text>
</comment>
<comment type="subcellular location">
    <subcellularLocation>
        <location evidence="1">Cytoplasm</location>
    </subcellularLocation>
</comment>
<comment type="similarity">
    <text evidence="1">Belongs to the class-II aminoacyl-tRNA synthetase family.</text>
</comment>